<dbReference type="EMBL" id="CP001661">
    <property type="protein sequence ID" value="ACT19595.1"/>
    <property type="molecule type" value="Genomic_DNA"/>
</dbReference>
<dbReference type="SMR" id="C6E643"/>
<dbReference type="STRING" id="443144.GM21_3574"/>
<dbReference type="KEGG" id="gem:GM21_3574"/>
<dbReference type="eggNOG" id="COG0443">
    <property type="taxonomic scope" value="Bacteria"/>
</dbReference>
<dbReference type="HOGENOM" id="CLU_005965_2_1_7"/>
<dbReference type="OrthoDB" id="9766019at2"/>
<dbReference type="GO" id="GO:0005524">
    <property type="term" value="F:ATP binding"/>
    <property type="evidence" value="ECO:0007669"/>
    <property type="project" value="UniProtKB-UniRule"/>
</dbReference>
<dbReference type="GO" id="GO:0140662">
    <property type="term" value="F:ATP-dependent protein folding chaperone"/>
    <property type="evidence" value="ECO:0007669"/>
    <property type="project" value="InterPro"/>
</dbReference>
<dbReference type="GO" id="GO:0051082">
    <property type="term" value="F:unfolded protein binding"/>
    <property type="evidence" value="ECO:0007669"/>
    <property type="project" value="InterPro"/>
</dbReference>
<dbReference type="CDD" id="cd10234">
    <property type="entry name" value="ASKHA_NBD_HSP70_DnaK-like"/>
    <property type="match status" value="1"/>
</dbReference>
<dbReference type="FunFam" id="2.60.34.10:FF:000014">
    <property type="entry name" value="Chaperone protein DnaK HSP70"/>
    <property type="match status" value="1"/>
</dbReference>
<dbReference type="FunFam" id="3.30.420.40:FF:000020">
    <property type="entry name" value="Chaperone protein HscA homolog"/>
    <property type="match status" value="1"/>
</dbReference>
<dbReference type="FunFam" id="3.30.30.30:FF:000003">
    <property type="entry name" value="Heat shock protein 9"/>
    <property type="match status" value="1"/>
</dbReference>
<dbReference type="FunFam" id="1.20.1270.10:FF:000001">
    <property type="entry name" value="Molecular chaperone DnaK"/>
    <property type="match status" value="1"/>
</dbReference>
<dbReference type="FunFam" id="3.30.420.40:FF:000004">
    <property type="entry name" value="Molecular chaperone DnaK"/>
    <property type="match status" value="1"/>
</dbReference>
<dbReference type="FunFam" id="3.90.640.10:FF:000003">
    <property type="entry name" value="Molecular chaperone DnaK"/>
    <property type="match status" value="1"/>
</dbReference>
<dbReference type="Gene3D" id="1.20.1270.10">
    <property type="match status" value="1"/>
</dbReference>
<dbReference type="Gene3D" id="3.30.420.40">
    <property type="match status" value="2"/>
</dbReference>
<dbReference type="Gene3D" id="3.90.640.10">
    <property type="entry name" value="Actin, Chain A, domain 4"/>
    <property type="match status" value="1"/>
</dbReference>
<dbReference type="Gene3D" id="2.60.34.10">
    <property type="entry name" value="Substrate Binding Domain Of DNAk, Chain A, domain 1"/>
    <property type="match status" value="1"/>
</dbReference>
<dbReference type="HAMAP" id="MF_00332">
    <property type="entry name" value="DnaK"/>
    <property type="match status" value="1"/>
</dbReference>
<dbReference type="InterPro" id="IPR043129">
    <property type="entry name" value="ATPase_NBD"/>
</dbReference>
<dbReference type="InterPro" id="IPR012725">
    <property type="entry name" value="Chaperone_DnaK"/>
</dbReference>
<dbReference type="InterPro" id="IPR018181">
    <property type="entry name" value="Heat_shock_70_CS"/>
</dbReference>
<dbReference type="InterPro" id="IPR029048">
    <property type="entry name" value="HSP70_C_sf"/>
</dbReference>
<dbReference type="InterPro" id="IPR029047">
    <property type="entry name" value="HSP70_peptide-bd_sf"/>
</dbReference>
<dbReference type="InterPro" id="IPR013126">
    <property type="entry name" value="Hsp_70_fam"/>
</dbReference>
<dbReference type="NCBIfam" id="NF001413">
    <property type="entry name" value="PRK00290.1"/>
    <property type="match status" value="1"/>
</dbReference>
<dbReference type="NCBIfam" id="NF003520">
    <property type="entry name" value="PRK05183.1"/>
    <property type="match status" value="1"/>
</dbReference>
<dbReference type="NCBIfam" id="TIGR02350">
    <property type="entry name" value="prok_dnaK"/>
    <property type="match status" value="1"/>
</dbReference>
<dbReference type="PANTHER" id="PTHR19375">
    <property type="entry name" value="HEAT SHOCK PROTEIN 70KDA"/>
    <property type="match status" value="1"/>
</dbReference>
<dbReference type="Pfam" id="PF00012">
    <property type="entry name" value="HSP70"/>
    <property type="match status" value="1"/>
</dbReference>
<dbReference type="PRINTS" id="PR00301">
    <property type="entry name" value="HEATSHOCK70"/>
</dbReference>
<dbReference type="SUPFAM" id="SSF53067">
    <property type="entry name" value="Actin-like ATPase domain"/>
    <property type="match status" value="2"/>
</dbReference>
<dbReference type="SUPFAM" id="SSF100934">
    <property type="entry name" value="Heat shock protein 70kD (HSP70), C-terminal subdomain"/>
    <property type="match status" value="1"/>
</dbReference>
<dbReference type="SUPFAM" id="SSF100920">
    <property type="entry name" value="Heat shock protein 70kD (HSP70), peptide-binding domain"/>
    <property type="match status" value="1"/>
</dbReference>
<dbReference type="PROSITE" id="PS00297">
    <property type="entry name" value="HSP70_1"/>
    <property type="match status" value="1"/>
</dbReference>
<dbReference type="PROSITE" id="PS00329">
    <property type="entry name" value="HSP70_2"/>
    <property type="match status" value="1"/>
</dbReference>
<dbReference type="PROSITE" id="PS01036">
    <property type="entry name" value="HSP70_3"/>
    <property type="match status" value="1"/>
</dbReference>
<evidence type="ECO:0000255" key="1">
    <source>
        <dbReference type="HAMAP-Rule" id="MF_00332"/>
    </source>
</evidence>
<evidence type="ECO:0000256" key="2">
    <source>
        <dbReference type="SAM" id="MobiDB-lite"/>
    </source>
</evidence>
<gene>
    <name evidence="1" type="primary">dnaK</name>
    <name type="ordered locus">GM21_3574</name>
</gene>
<feature type="chain" id="PRO_1000205189" description="Chaperone protein DnaK">
    <location>
        <begin position="1"/>
        <end position="640"/>
    </location>
</feature>
<feature type="region of interest" description="Disordered" evidence="2">
    <location>
        <begin position="600"/>
        <end position="640"/>
    </location>
</feature>
<feature type="compositionally biased region" description="Acidic residues" evidence="2">
    <location>
        <begin position="628"/>
        <end position="640"/>
    </location>
</feature>
<feature type="modified residue" description="Phosphothreonine; by autocatalysis" evidence="1">
    <location>
        <position position="198"/>
    </location>
</feature>
<name>DNAK_GEOSM</name>
<reference key="1">
    <citation type="submission" date="2009-07" db="EMBL/GenBank/DDBJ databases">
        <title>Complete sequence of Geobacter sp. M21.</title>
        <authorList>
            <consortium name="US DOE Joint Genome Institute"/>
            <person name="Lucas S."/>
            <person name="Copeland A."/>
            <person name="Lapidus A."/>
            <person name="Glavina del Rio T."/>
            <person name="Dalin E."/>
            <person name="Tice H."/>
            <person name="Bruce D."/>
            <person name="Goodwin L."/>
            <person name="Pitluck S."/>
            <person name="Saunders E."/>
            <person name="Brettin T."/>
            <person name="Detter J.C."/>
            <person name="Han C."/>
            <person name="Larimer F."/>
            <person name="Land M."/>
            <person name="Hauser L."/>
            <person name="Kyrpides N."/>
            <person name="Ovchinnikova G."/>
            <person name="Lovley D."/>
        </authorList>
    </citation>
    <scope>NUCLEOTIDE SEQUENCE [LARGE SCALE GENOMIC DNA]</scope>
    <source>
        <strain>M21</strain>
    </source>
</reference>
<proteinExistence type="inferred from homology"/>
<protein>
    <recommendedName>
        <fullName evidence="1">Chaperone protein DnaK</fullName>
    </recommendedName>
    <alternativeName>
        <fullName evidence="1">HSP70</fullName>
    </alternativeName>
    <alternativeName>
        <fullName evidence="1">Heat shock 70 kDa protein</fullName>
    </alternativeName>
    <alternativeName>
        <fullName evidence="1">Heat shock protein 70</fullName>
    </alternativeName>
</protein>
<organism>
    <name type="scientific">Geobacter sp. (strain M21)</name>
    <dbReference type="NCBI Taxonomy" id="443144"/>
    <lineage>
        <taxon>Bacteria</taxon>
        <taxon>Pseudomonadati</taxon>
        <taxon>Thermodesulfobacteriota</taxon>
        <taxon>Desulfuromonadia</taxon>
        <taxon>Geobacterales</taxon>
        <taxon>Geobacteraceae</taxon>
        <taxon>Geobacter</taxon>
    </lineage>
</organism>
<comment type="function">
    <text evidence="1">Acts as a chaperone.</text>
</comment>
<comment type="induction">
    <text evidence="1">By stress conditions e.g. heat shock.</text>
</comment>
<comment type="similarity">
    <text evidence="1">Belongs to the heat shock protein 70 family.</text>
</comment>
<keyword id="KW-0067">ATP-binding</keyword>
<keyword id="KW-0143">Chaperone</keyword>
<keyword id="KW-0547">Nucleotide-binding</keyword>
<keyword id="KW-0597">Phosphoprotein</keyword>
<keyword id="KW-0346">Stress response</keyword>
<accession>C6E643</accession>
<sequence>MSRVIGIDLGTTNSCVAVMEGGEPVVIANAEGSRTTPSMIAFAESGERLVGQQAKRQAVTNPENTLYAIKRLIGRKFDTEAVKKDIAISPFKIVKADNSDAWVEVRGQKYSPPEISAMVLQKMKKTAEDYLGETVTDAVITVPAYFDDSQRQATKDAGKIAGLNVLRIINEPTAAALAYGLDKKKDEKIAVFDLGGGTFDVSILELGEGVFEVKSTNGDTFLGGEDFDQKIIDHIADEFKKDQGIDLRGDKMALQRLKEAGEKAKCELSTSLETDINLPFITADASGPKHLTMKLTRAKLESICAELIANLEGPCRTALKDAGLSASDIDEVILVGGMTRMPIVQKKVQDIFGKVPNRGVNPDEVVAIGAAIQGGVLRGDVKDVLLLDVTPLSLGIETLGGVLTKLIDKNSTIPCRKSQVFSTAADNQPAVSIHVLQGEREMAADNKTLGNFELSGIPSAPRGVPQIEVTFDIDANGIVHVSAKDLGTGKEQSIRITASSGLSKEEVEKMVREAEAHAADDKKKRELIEAKNQADNLIYQTEKSLTEFGDKIDASEKQKIEEGVAALKKALEGSDADEIKKASDSLMQASHKLAEAVYAKTQGAGAEGSEQPHGEQEAGGAAKGETVVDADFEEVKDDKK</sequence>